<dbReference type="EMBL" id="AF214978">
    <property type="protein sequence ID" value="AAG60406.1"/>
    <property type="molecule type" value="mRNA"/>
</dbReference>
<dbReference type="ConoServer" id="665">
    <property type="toxin name" value="Pn-B01122 precursor"/>
</dbReference>
<dbReference type="GO" id="GO:0005576">
    <property type="term" value="C:extracellular region"/>
    <property type="evidence" value="ECO:0007669"/>
    <property type="project" value="UniProtKB-SubCell"/>
</dbReference>
<dbReference type="GO" id="GO:0090729">
    <property type="term" value="F:toxin activity"/>
    <property type="evidence" value="ECO:0007669"/>
    <property type="project" value="UniProtKB-KW"/>
</dbReference>
<dbReference type="InterPro" id="IPR031565">
    <property type="entry name" value="T-conotoxin"/>
</dbReference>
<dbReference type="Pfam" id="PF16981">
    <property type="entry name" value="Chi-conotoxin"/>
    <property type="match status" value="1"/>
</dbReference>
<feature type="signal peptide" evidence="2">
    <location>
        <begin position="1"/>
        <end position="22"/>
    </location>
</feature>
<feature type="propeptide" id="PRO_0000274082" evidence="1">
    <location>
        <begin position="23"/>
        <end position="48"/>
    </location>
</feature>
<feature type="peptide" id="PRO_0000274083" description="Conotoxin Pn-B01122">
    <location>
        <begin position="51"/>
        <end position="64"/>
    </location>
</feature>
<sequence>MRCLPVFVILLLLIASAPSVDARPKTKDDIPLVSFQDNAKRALQILSNKRYCCYFDYSCCLYLR</sequence>
<comment type="subcellular location">
    <subcellularLocation>
        <location evidence="4">Secreted</location>
    </subcellularLocation>
</comment>
<comment type="tissue specificity">
    <text evidence="4">Expressed by the venom duct.</text>
</comment>
<comment type="domain">
    <text evidence="3">The cysteine framework is V (CC-CC).</text>
</comment>
<comment type="PTM">
    <text evidence="3">Contains 2 disulfide bonds that can be either 'C1-C3, C2-C4' or 'C1-C4, C2-C3', since these disulfide connectivities have been observed for conotoxins with cysteine framework V (for examples, see AC P0DQQ7 and AC P81755).</text>
</comment>
<comment type="similarity">
    <text evidence="3">Belongs to the conotoxin T superfamily.</text>
</comment>
<reference key="1">
    <citation type="journal article" date="2001" name="Mol. Biol. Evol.">
        <title>Mechanisms for evolving hypervariability: the case of conopeptides.</title>
        <authorList>
            <person name="Conticello S.G."/>
            <person name="Gilad Y."/>
            <person name="Avidan N."/>
            <person name="Ben-Asher E."/>
            <person name="Levy Z."/>
            <person name="Fainzilber M."/>
        </authorList>
    </citation>
    <scope>NUCLEOTIDE SEQUENCE [MRNA]</scope>
    <source>
        <tissue>Venom duct</tissue>
    </source>
</reference>
<evidence type="ECO:0000250" key="1"/>
<evidence type="ECO:0000255" key="2"/>
<evidence type="ECO:0000305" key="3"/>
<evidence type="ECO:0000305" key="4">
    <source>
    </source>
</evidence>
<evidence type="ECO:0000312" key="5">
    <source>
        <dbReference type="EMBL" id="AAG60406.1"/>
    </source>
</evidence>
<name>CT122_CONPE</name>
<protein>
    <recommendedName>
        <fullName evidence="5">Conotoxin Pn-B01122</fullName>
    </recommendedName>
</protein>
<accession>Q9BPF1</accession>
<keyword id="KW-0165">Cleavage on pair of basic residues</keyword>
<keyword id="KW-1015">Disulfide bond</keyword>
<keyword id="KW-0964">Secreted</keyword>
<keyword id="KW-0732">Signal</keyword>
<keyword id="KW-0800">Toxin</keyword>
<organism>
    <name type="scientific">Conus pennaceus</name>
    <name type="common">Feathered cone</name>
    <name type="synonym">Conus episcopus</name>
    <dbReference type="NCBI Taxonomy" id="37335"/>
    <lineage>
        <taxon>Eukaryota</taxon>
        <taxon>Metazoa</taxon>
        <taxon>Spiralia</taxon>
        <taxon>Lophotrochozoa</taxon>
        <taxon>Mollusca</taxon>
        <taxon>Gastropoda</taxon>
        <taxon>Caenogastropoda</taxon>
        <taxon>Neogastropoda</taxon>
        <taxon>Conoidea</taxon>
        <taxon>Conidae</taxon>
        <taxon>Conus</taxon>
        <taxon>Darioconus</taxon>
    </lineage>
</organism>
<proteinExistence type="inferred from homology"/>